<accession>Q0TLQ2</accession>
<comment type="function">
    <text evidence="1">Catalyzes the initial step of the lipid cycle reactions in the biosynthesis of the cell wall peptidoglycan: transfers peptidoglycan precursor phospho-MurNAc-pentapeptide from UDP-MurNAc-pentapeptide onto the lipid carrier undecaprenyl phosphate, yielding undecaprenyl-pyrophosphoryl-MurNAc-pentapeptide, known as lipid I.</text>
</comment>
<comment type="catalytic activity">
    <reaction evidence="1">
        <text>UDP-N-acetyl-alpha-D-muramoyl-L-alanyl-gamma-D-glutamyl-meso-2,6-diaminopimeloyl-D-alanyl-D-alanine + di-trans,octa-cis-undecaprenyl phosphate = di-trans,octa-cis-undecaprenyl diphospho-N-acetyl-alpha-D-muramoyl-L-alanyl-D-glutamyl-meso-2,6-diaminopimeloyl-D-alanyl-D-alanine + UMP</text>
        <dbReference type="Rhea" id="RHEA:28386"/>
        <dbReference type="ChEBI" id="CHEBI:57865"/>
        <dbReference type="ChEBI" id="CHEBI:60392"/>
        <dbReference type="ChEBI" id="CHEBI:61386"/>
        <dbReference type="ChEBI" id="CHEBI:61387"/>
        <dbReference type="EC" id="2.7.8.13"/>
    </reaction>
</comment>
<comment type="cofactor">
    <cofactor evidence="1">
        <name>Mg(2+)</name>
        <dbReference type="ChEBI" id="CHEBI:18420"/>
    </cofactor>
</comment>
<comment type="pathway">
    <text evidence="1">Cell wall biogenesis; peptidoglycan biosynthesis.</text>
</comment>
<comment type="subcellular location">
    <subcellularLocation>
        <location evidence="1">Cell inner membrane</location>
        <topology evidence="1">Multi-pass membrane protein</topology>
    </subcellularLocation>
</comment>
<comment type="similarity">
    <text evidence="1">Belongs to the glycosyltransferase 4 family. MraY subfamily.</text>
</comment>
<reference key="1">
    <citation type="journal article" date="2006" name="Mol. Microbiol.">
        <title>Role of pathogenicity island-associated integrases in the genome plasticity of uropathogenic Escherichia coli strain 536.</title>
        <authorList>
            <person name="Hochhut B."/>
            <person name="Wilde C."/>
            <person name="Balling G."/>
            <person name="Middendorf B."/>
            <person name="Dobrindt U."/>
            <person name="Brzuszkiewicz E."/>
            <person name="Gottschalk G."/>
            <person name="Carniel E."/>
            <person name="Hacker J."/>
        </authorList>
    </citation>
    <scope>NUCLEOTIDE SEQUENCE [LARGE SCALE GENOMIC DNA]</scope>
    <source>
        <strain>536 / UPEC</strain>
    </source>
</reference>
<protein>
    <recommendedName>
        <fullName evidence="1">Phospho-N-acetylmuramoyl-pentapeptide-transferase</fullName>
        <ecNumber evidence="1">2.7.8.13</ecNumber>
    </recommendedName>
    <alternativeName>
        <fullName evidence="1">UDP-MurNAc-pentapeptide phosphotransferase</fullName>
    </alternativeName>
</protein>
<name>MRAY_ECOL5</name>
<sequence length="360" mass="39875">MLVWLAEHLVKYYSGFNVFSYLTFRAIVSLLTALFISLWMGPRMIAHLQKLSFGQVVRNDGPESHFSKRGTPTMGGIMILTAIVISVLLWAYPSNPYVWCVLVVLVGYGVIGFVDDYRKVVRKDTKGLIARWKYFWMSVIALGVAFALYLAGKDTPATQLVVPFFKDVMPQLGLFYILLAYFVIVGTGNAVNLTDGLDGLAIMPTVFVAGGFALVAWATGNMNFASYLHIPYLRHAGELVIVCTAIVGAGLGFLWFNTYPAQVFMGDVGSLALGGALGIIAVLLRQEFLLVIMGGVFVVETLSVILQVGSFKLRGQRIFRMAPIHHHYELKGWPEPRVIVRFWIISLMLVLIGLATLKVR</sequence>
<feature type="chain" id="PRO_1000002969" description="Phospho-N-acetylmuramoyl-pentapeptide-transferase">
    <location>
        <begin position="1"/>
        <end position="360"/>
    </location>
</feature>
<feature type="topological domain" description="Periplasmic" evidence="1">
    <location>
        <begin position="1"/>
        <end position="25"/>
    </location>
</feature>
<feature type="transmembrane region" description="Helical" evidence="1">
    <location>
        <begin position="26"/>
        <end position="46"/>
    </location>
</feature>
<feature type="topological domain" description="Cytoplasmic" evidence="1">
    <location>
        <begin position="47"/>
        <end position="71"/>
    </location>
</feature>
<feature type="transmembrane region" description="Helical" evidence="1">
    <location>
        <begin position="72"/>
        <end position="92"/>
    </location>
</feature>
<feature type="topological domain" description="Periplasmic" evidence="1">
    <location>
        <position position="93"/>
    </location>
</feature>
<feature type="transmembrane region" description="Helical" evidence="1">
    <location>
        <begin position="94"/>
        <end position="114"/>
    </location>
</feature>
<feature type="topological domain" description="Cytoplasmic" evidence="1">
    <location>
        <begin position="115"/>
        <end position="131"/>
    </location>
</feature>
<feature type="transmembrane region" description="Helical" evidence="1">
    <location>
        <begin position="132"/>
        <end position="152"/>
    </location>
</feature>
<feature type="topological domain" description="Periplasmic" evidence="1">
    <location>
        <begin position="153"/>
        <end position="167"/>
    </location>
</feature>
<feature type="transmembrane region" description="Helical" evidence="1">
    <location>
        <begin position="168"/>
        <end position="188"/>
    </location>
</feature>
<feature type="topological domain" description="Cytoplasmic" evidence="1">
    <location>
        <begin position="189"/>
        <end position="198"/>
    </location>
</feature>
<feature type="transmembrane region" description="Helical" evidence="1">
    <location>
        <begin position="199"/>
        <end position="219"/>
    </location>
</feature>
<feature type="topological domain" description="Periplasmic" evidence="1">
    <location>
        <begin position="220"/>
        <end position="235"/>
    </location>
</feature>
<feature type="transmembrane region" description="Helical" evidence="1">
    <location>
        <begin position="236"/>
        <end position="256"/>
    </location>
</feature>
<feature type="topological domain" description="Cytoplasmic" evidence="1">
    <location>
        <begin position="257"/>
        <end position="262"/>
    </location>
</feature>
<feature type="transmembrane region" description="Helical" evidence="1">
    <location>
        <begin position="263"/>
        <end position="283"/>
    </location>
</feature>
<feature type="topological domain" description="Periplasmic" evidence="1">
    <location>
        <begin position="284"/>
        <end position="287"/>
    </location>
</feature>
<feature type="transmembrane region" description="Helical" evidence="1">
    <location>
        <begin position="288"/>
        <end position="308"/>
    </location>
</feature>
<feature type="topological domain" description="Cytoplasmic" evidence="1">
    <location>
        <begin position="309"/>
        <end position="337"/>
    </location>
</feature>
<feature type="transmembrane region" description="Helical" evidence="1">
    <location>
        <begin position="338"/>
        <end position="358"/>
    </location>
</feature>
<feature type="topological domain" description="Periplasmic" evidence="1">
    <location>
        <begin position="359"/>
        <end position="360"/>
    </location>
</feature>
<evidence type="ECO:0000255" key="1">
    <source>
        <dbReference type="HAMAP-Rule" id="MF_00038"/>
    </source>
</evidence>
<gene>
    <name evidence="1" type="primary">mraY</name>
    <name type="ordered locus">ECP_0089</name>
</gene>
<proteinExistence type="inferred from homology"/>
<dbReference type="EC" id="2.7.8.13" evidence="1"/>
<dbReference type="EMBL" id="CP000247">
    <property type="protein sequence ID" value="ABG68129.1"/>
    <property type="molecule type" value="Genomic_DNA"/>
</dbReference>
<dbReference type="RefSeq" id="WP_000964131.1">
    <property type="nucleotide sequence ID" value="NC_008253.1"/>
</dbReference>
<dbReference type="SMR" id="Q0TLQ2"/>
<dbReference type="GeneID" id="93777347"/>
<dbReference type="KEGG" id="ecp:ECP_0089"/>
<dbReference type="HOGENOM" id="CLU_023982_0_0_6"/>
<dbReference type="UniPathway" id="UPA00219"/>
<dbReference type="Proteomes" id="UP000009182">
    <property type="component" value="Chromosome"/>
</dbReference>
<dbReference type="GO" id="GO:0005886">
    <property type="term" value="C:plasma membrane"/>
    <property type="evidence" value="ECO:0007669"/>
    <property type="project" value="UniProtKB-SubCell"/>
</dbReference>
<dbReference type="GO" id="GO:0046872">
    <property type="term" value="F:metal ion binding"/>
    <property type="evidence" value="ECO:0007669"/>
    <property type="project" value="UniProtKB-KW"/>
</dbReference>
<dbReference type="GO" id="GO:0008963">
    <property type="term" value="F:phospho-N-acetylmuramoyl-pentapeptide-transferase activity"/>
    <property type="evidence" value="ECO:0007669"/>
    <property type="project" value="UniProtKB-UniRule"/>
</dbReference>
<dbReference type="GO" id="GO:0051992">
    <property type="term" value="F:UDP-N-acetylmuramoyl-L-alanyl-D-glutamyl-meso-2,6-diaminopimelyl-D-alanyl-D-alanine:undecaprenyl-phosphate transferase activity"/>
    <property type="evidence" value="ECO:0007669"/>
    <property type="project" value="RHEA"/>
</dbReference>
<dbReference type="GO" id="GO:0051301">
    <property type="term" value="P:cell division"/>
    <property type="evidence" value="ECO:0007669"/>
    <property type="project" value="UniProtKB-KW"/>
</dbReference>
<dbReference type="GO" id="GO:0071555">
    <property type="term" value="P:cell wall organization"/>
    <property type="evidence" value="ECO:0007669"/>
    <property type="project" value="UniProtKB-KW"/>
</dbReference>
<dbReference type="GO" id="GO:0009252">
    <property type="term" value="P:peptidoglycan biosynthetic process"/>
    <property type="evidence" value="ECO:0007669"/>
    <property type="project" value="UniProtKB-UniRule"/>
</dbReference>
<dbReference type="GO" id="GO:0008360">
    <property type="term" value="P:regulation of cell shape"/>
    <property type="evidence" value="ECO:0007669"/>
    <property type="project" value="UniProtKB-KW"/>
</dbReference>
<dbReference type="CDD" id="cd06852">
    <property type="entry name" value="GT_MraY"/>
    <property type="match status" value="1"/>
</dbReference>
<dbReference type="HAMAP" id="MF_00038">
    <property type="entry name" value="MraY"/>
    <property type="match status" value="1"/>
</dbReference>
<dbReference type="InterPro" id="IPR000715">
    <property type="entry name" value="Glycosyl_transferase_4"/>
</dbReference>
<dbReference type="InterPro" id="IPR003524">
    <property type="entry name" value="PNAcMuramoyl-5peptid_Trfase"/>
</dbReference>
<dbReference type="InterPro" id="IPR018480">
    <property type="entry name" value="PNAcMuramoyl-5peptid_Trfase_CS"/>
</dbReference>
<dbReference type="NCBIfam" id="TIGR00445">
    <property type="entry name" value="mraY"/>
    <property type="match status" value="1"/>
</dbReference>
<dbReference type="PANTHER" id="PTHR22926">
    <property type="entry name" value="PHOSPHO-N-ACETYLMURAMOYL-PENTAPEPTIDE-TRANSFERASE"/>
    <property type="match status" value="1"/>
</dbReference>
<dbReference type="PANTHER" id="PTHR22926:SF5">
    <property type="entry name" value="PHOSPHO-N-ACETYLMURAMOYL-PENTAPEPTIDE-TRANSFERASE HOMOLOG"/>
    <property type="match status" value="1"/>
</dbReference>
<dbReference type="Pfam" id="PF00953">
    <property type="entry name" value="Glycos_transf_4"/>
    <property type="match status" value="1"/>
</dbReference>
<dbReference type="Pfam" id="PF10555">
    <property type="entry name" value="MraY_sig1"/>
    <property type="match status" value="1"/>
</dbReference>
<dbReference type="PROSITE" id="PS01347">
    <property type="entry name" value="MRAY_1"/>
    <property type="match status" value="1"/>
</dbReference>
<dbReference type="PROSITE" id="PS01348">
    <property type="entry name" value="MRAY_2"/>
    <property type="match status" value="1"/>
</dbReference>
<keyword id="KW-0131">Cell cycle</keyword>
<keyword id="KW-0132">Cell division</keyword>
<keyword id="KW-0997">Cell inner membrane</keyword>
<keyword id="KW-1003">Cell membrane</keyword>
<keyword id="KW-0133">Cell shape</keyword>
<keyword id="KW-0961">Cell wall biogenesis/degradation</keyword>
<keyword id="KW-0460">Magnesium</keyword>
<keyword id="KW-0472">Membrane</keyword>
<keyword id="KW-0479">Metal-binding</keyword>
<keyword id="KW-0573">Peptidoglycan synthesis</keyword>
<keyword id="KW-0808">Transferase</keyword>
<keyword id="KW-0812">Transmembrane</keyword>
<keyword id="KW-1133">Transmembrane helix</keyword>
<organism>
    <name type="scientific">Escherichia coli O6:K15:H31 (strain 536 / UPEC)</name>
    <dbReference type="NCBI Taxonomy" id="362663"/>
    <lineage>
        <taxon>Bacteria</taxon>
        <taxon>Pseudomonadati</taxon>
        <taxon>Pseudomonadota</taxon>
        <taxon>Gammaproteobacteria</taxon>
        <taxon>Enterobacterales</taxon>
        <taxon>Enterobacteriaceae</taxon>
        <taxon>Escherichia</taxon>
    </lineage>
</organism>